<protein>
    <recommendedName>
        <fullName>Alcohol dehydrogenase</fullName>
        <ecNumber>1.1.1.1</ecNumber>
    </recommendedName>
</protein>
<organism>
    <name type="scientific">Scaptomyza albovittata</name>
    <name type="common">Fruit fly</name>
    <dbReference type="NCBI Taxonomy" id="7299"/>
    <lineage>
        <taxon>Eukaryota</taxon>
        <taxon>Metazoa</taxon>
        <taxon>Ecdysozoa</taxon>
        <taxon>Arthropoda</taxon>
        <taxon>Hexapoda</taxon>
        <taxon>Insecta</taxon>
        <taxon>Pterygota</taxon>
        <taxon>Neoptera</taxon>
        <taxon>Endopterygota</taxon>
        <taxon>Diptera</taxon>
        <taxon>Brachycera</taxon>
        <taxon>Muscomorpha</taxon>
        <taxon>Ephydroidea</taxon>
        <taxon>Drosophilidae</taxon>
        <taxon>Scaptomyza</taxon>
    </lineage>
</organism>
<keyword id="KW-0520">NAD</keyword>
<keyword id="KW-0560">Oxidoreductase</keyword>
<feature type="chain" id="PRO_0000054515" description="Alcohol dehydrogenase">
    <location>
        <begin position="1"/>
        <end position="254"/>
    </location>
</feature>
<feature type="active site" description="Proton acceptor" evidence="2">
    <location>
        <position position="151"/>
    </location>
</feature>
<feature type="binding site" evidence="1">
    <location>
        <begin position="10"/>
        <end position="33"/>
    </location>
    <ligand>
        <name>NAD(+)</name>
        <dbReference type="ChEBI" id="CHEBI:57540"/>
    </ligand>
</feature>
<feature type="binding site" evidence="1">
    <location>
        <position position="138"/>
    </location>
    <ligand>
        <name>substrate</name>
    </ligand>
</feature>
<name>ADH_SCAAL</name>
<dbReference type="EC" id="1.1.1.1"/>
<dbReference type="EMBL" id="M80925">
    <property type="protein sequence ID" value="AAA29953.1"/>
    <property type="molecule type" value="Genomic_DNA"/>
</dbReference>
<dbReference type="PIR" id="A46276">
    <property type="entry name" value="A46276"/>
</dbReference>
<dbReference type="SMR" id="P25988"/>
<dbReference type="GO" id="GO:0005737">
    <property type="term" value="C:cytoplasm"/>
    <property type="evidence" value="ECO:0007669"/>
    <property type="project" value="TreeGrafter"/>
</dbReference>
<dbReference type="GO" id="GO:0004022">
    <property type="term" value="F:alcohol dehydrogenase (NAD+) activity"/>
    <property type="evidence" value="ECO:0007669"/>
    <property type="project" value="UniProtKB-EC"/>
</dbReference>
<dbReference type="GO" id="GO:0006066">
    <property type="term" value="P:alcohol metabolic process"/>
    <property type="evidence" value="ECO:0007669"/>
    <property type="project" value="InterPro"/>
</dbReference>
<dbReference type="CDD" id="cd05323">
    <property type="entry name" value="ADH_SDR_c_like"/>
    <property type="match status" value="1"/>
</dbReference>
<dbReference type="FunFam" id="3.40.50.720:FF:000302">
    <property type="entry name" value="Alcohol dehydrogenase"/>
    <property type="match status" value="1"/>
</dbReference>
<dbReference type="Gene3D" id="3.40.50.720">
    <property type="entry name" value="NAD(P)-binding Rossmann-like Domain"/>
    <property type="match status" value="1"/>
</dbReference>
<dbReference type="InterPro" id="IPR002425">
    <property type="entry name" value="ADH_Drosophila-type"/>
</dbReference>
<dbReference type="InterPro" id="IPR036291">
    <property type="entry name" value="NAD(P)-bd_dom_sf"/>
</dbReference>
<dbReference type="InterPro" id="IPR020904">
    <property type="entry name" value="Sc_DH/Rdtase_CS"/>
</dbReference>
<dbReference type="InterPro" id="IPR002347">
    <property type="entry name" value="SDR_fam"/>
</dbReference>
<dbReference type="PANTHER" id="PTHR44229">
    <property type="entry name" value="15-HYDROXYPROSTAGLANDIN DEHYDROGENASE [NAD(+)]"/>
    <property type="match status" value="1"/>
</dbReference>
<dbReference type="PANTHER" id="PTHR44229:SF8">
    <property type="entry name" value="ALCOHOL DEHYDROGENASE-RELATED"/>
    <property type="match status" value="1"/>
</dbReference>
<dbReference type="Pfam" id="PF00106">
    <property type="entry name" value="adh_short"/>
    <property type="match status" value="1"/>
</dbReference>
<dbReference type="PRINTS" id="PR01168">
    <property type="entry name" value="ALCDHDRGNASE"/>
</dbReference>
<dbReference type="PRINTS" id="PR01167">
    <property type="entry name" value="INSADHFAMILY"/>
</dbReference>
<dbReference type="PRINTS" id="PR00080">
    <property type="entry name" value="SDRFAMILY"/>
</dbReference>
<dbReference type="SUPFAM" id="SSF51735">
    <property type="entry name" value="NAD(P)-binding Rossmann-fold domains"/>
    <property type="match status" value="1"/>
</dbReference>
<dbReference type="PROSITE" id="PS00061">
    <property type="entry name" value="ADH_SHORT"/>
    <property type="match status" value="1"/>
</dbReference>
<comment type="catalytic activity">
    <reaction evidence="2">
        <text>a primary alcohol + NAD(+) = an aldehyde + NADH + H(+)</text>
        <dbReference type="Rhea" id="RHEA:10736"/>
        <dbReference type="ChEBI" id="CHEBI:15378"/>
        <dbReference type="ChEBI" id="CHEBI:15734"/>
        <dbReference type="ChEBI" id="CHEBI:17478"/>
        <dbReference type="ChEBI" id="CHEBI:57540"/>
        <dbReference type="ChEBI" id="CHEBI:57945"/>
        <dbReference type="EC" id="1.1.1.1"/>
    </reaction>
</comment>
<comment type="catalytic activity">
    <reaction evidence="2">
        <text>a secondary alcohol + NAD(+) = a ketone + NADH + H(+)</text>
        <dbReference type="Rhea" id="RHEA:10740"/>
        <dbReference type="ChEBI" id="CHEBI:15378"/>
        <dbReference type="ChEBI" id="CHEBI:17087"/>
        <dbReference type="ChEBI" id="CHEBI:35681"/>
        <dbReference type="ChEBI" id="CHEBI:57540"/>
        <dbReference type="ChEBI" id="CHEBI:57945"/>
        <dbReference type="EC" id="1.1.1.1"/>
    </reaction>
</comment>
<comment type="subunit">
    <text>Homodimer.</text>
</comment>
<comment type="similarity">
    <text evidence="3">Belongs to the short-chain dehydrogenases/reductases (SDR) family.</text>
</comment>
<gene>
    <name type="primary">Adh</name>
</gene>
<reference key="1">
    <citation type="journal article" date="1991" name="Mol. Biol. Evol.">
        <title>The molecular evolution of the alcohol dehydrogenase locus and the phylogeny of Hawaiian Drosophila.</title>
        <authorList>
            <person name="Thomas R.H."/>
            <person name="Hunt J.A."/>
        </authorList>
    </citation>
    <scope>NUCLEOTIDE SEQUENCE [GENOMIC DNA]</scope>
</reference>
<reference key="2">
    <citation type="journal article" date="1993" name="Mol. Biol. Evol.">
        <title>Phylogenetic relationships in Drosophila: a conflict between molecular and morphological data.</title>
        <authorList>
            <person name="Thomas R.H."/>
            <person name="Hunt J.A."/>
        </authorList>
    </citation>
    <scope>NUCLEOTIDE SEQUENCE [GENOMIC DNA]</scope>
</reference>
<evidence type="ECO:0000250" key="1"/>
<evidence type="ECO:0000255" key="2">
    <source>
        <dbReference type="PROSITE-ProRule" id="PRU10001"/>
    </source>
</evidence>
<evidence type="ECO:0000305" key="3"/>
<sequence>MCIAGKNIIFVAGLGGIGLDTNREIVKSGPKNLVILDRIENPAAIAELQAINPNVTVSFYPYDVTVALAESVKLLKTIFAKLKTVDLLVNGAGILDDHQIERTIAVNFTGTVNTTTAIMEFWDKRKGGPGGVIANICSVTGFNSIYQVPVYSASKAAALSFTSSLARLAPITGVTVYSINPGITDTTLVHKFNSWLDVEPRVAEKLLAFPTQTSLACAKNFVRAIEANKNGAIWKLDLNRLDEIEWTKHWDSGI</sequence>
<proteinExistence type="inferred from homology"/>
<accession>P25988</accession>